<protein>
    <recommendedName>
        <fullName evidence="1">2-aminoethylphosphonate--pyruvate transaminase</fullName>
        <ecNumber evidence="1">2.6.1.37</ecNumber>
    </recommendedName>
    <alternativeName>
        <fullName evidence="1">2-aminoethylphosphonate aminotransferase</fullName>
    </alternativeName>
    <alternativeName>
        <fullName evidence="1">AEP transaminase</fullName>
        <shortName evidence="1">AEPT</shortName>
    </alternativeName>
</protein>
<accession>Q88YN9</accession>
<accession>F9ULU5</accession>
<comment type="function">
    <text evidence="1">Involved in phosphonate degradation.</text>
</comment>
<comment type="catalytic activity">
    <reaction evidence="1">
        <text>(2-aminoethyl)phosphonate + pyruvate = phosphonoacetaldehyde + L-alanine</text>
        <dbReference type="Rhea" id="RHEA:17021"/>
        <dbReference type="ChEBI" id="CHEBI:15361"/>
        <dbReference type="ChEBI" id="CHEBI:57418"/>
        <dbReference type="ChEBI" id="CHEBI:57972"/>
        <dbReference type="ChEBI" id="CHEBI:58383"/>
        <dbReference type="EC" id="2.6.1.37"/>
    </reaction>
</comment>
<comment type="cofactor">
    <cofactor evidence="1">
        <name>pyridoxal 5'-phosphate</name>
        <dbReference type="ChEBI" id="CHEBI:597326"/>
    </cofactor>
</comment>
<comment type="subunit">
    <text evidence="1">Homodimer.</text>
</comment>
<comment type="similarity">
    <text evidence="1">Belongs to the class-V pyridoxal-phosphate-dependent aminotransferase family. PhnW subfamily.</text>
</comment>
<proteinExistence type="inferred from homology"/>
<sequence>MKQPYLLLTPGPLSTTASVKDAMQIDYCTWDSDYRHVTETIRQQILAMAQANPENYTTVLLQGSGSFGVEATIGTAVPRTDATLMIAINGAYGHRISQIAEYYDIPHIDVVFNEDEAVDPVRIEATLADHPEITHFATVHSETTTGILNPIEALMPIMHEHGIVTIIDAMSSLGGVPISIDELDCDYLISSANKCVQGVPGFAFIIAKQATLAHTADNARSLCLDLYDQWQAMTKQPGKWRFTSPTHVVHAFAQALIELQAEGGVTPRYQRYRASQQLLSDGLQALGFELVIDPAIQGPIITSFKYPNVDFDFADFYQFIKQRGFVIYPGKVSNIPSFRIGTIGDVDTTDIQRLLTIIGDYQQLHR</sequence>
<organism>
    <name type="scientific">Lactiplantibacillus plantarum (strain ATCC BAA-793 / NCIMB 8826 / WCFS1)</name>
    <name type="common">Lactobacillus plantarum</name>
    <dbReference type="NCBI Taxonomy" id="220668"/>
    <lineage>
        <taxon>Bacteria</taxon>
        <taxon>Bacillati</taxon>
        <taxon>Bacillota</taxon>
        <taxon>Bacilli</taxon>
        <taxon>Lactobacillales</taxon>
        <taxon>Lactobacillaceae</taxon>
        <taxon>Lactiplantibacillus</taxon>
    </lineage>
</organism>
<dbReference type="EC" id="2.6.1.37" evidence="1"/>
<dbReference type="EMBL" id="AL935263">
    <property type="protein sequence ID" value="CCC78184.1"/>
    <property type="molecule type" value="Genomic_DNA"/>
</dbReference>
<dbReference type="RefSeq" id="WP_003644906.1">
    <property type="nucleotide sequence ID" value="NC_004567.2"/>
</dbReference>
<dbReference type="RefSeq" id="YP_004888698.1">
    <property type="nucleotide sequence ID" value="NC_004567.2"/>
</dbReference>
<dbReference type="SMR" id="Q88YN9"/>
<dbReference type="STRING" id="220668.lp_0710"/>
<dbReference type="EnsemblBacteria" id="CCC78184">
    <property type="protein sequence ID" value="CCC78184"/>
    <property type="gene ID" value="lp_0710"/>
</dbReference>
<dbReference type="KEGG" id="lpl:lp_0710"/>
<dbReference type="PATRIC" id="fig|220668.9.peg.597"/>
<dbReference type="eggNOG" id="COG0075">
    <property type="taxonomic scope" value="Bacteria"/>
</dbReference>
<dbReference type="HOGENOM" id="CLU_027686_3_1_9"/>
<dbReference type="OrthoDB" id="389074at2"/>
<dbReference type="PhylomeDB" id="Q88YN9"/>
<dbReference type="Proteomes" id="UP000000432">
    <property type="component" value="Chromosome"/>
</dbReference>
<dbReference type="GO" id="GO:0047304">
    <property type="term" value="F:2-aminoethylphosphonate-pyruvate transaminase activity"/>
    <property type="evidence" value="ECO:0007669"/>
    <property type="project" value="UniProtKB-UniRule"/>
</dbReference>
<dbReference type="GO" id="GO:0019700">
    <property type="term" value="P:organic phosphonate catabolic process"/>
    <property type="evidence" value="ECO:0007669"/>
    <property type="project" value="InterPro"/>
</dbReference>
<dbReference type="Gene3D" id="3.90.1150.10">
    <property type="entry name" value="Aspartate Aminotransferase, domain 1"/>
    <property type="match status" value="1"/>
</dbReference>
<dbReference type="Gene3D" id="3.40.640.10">
    <property type="entry name" value="Type I PLP-dependent aspartate aminotransferase-like (Major domain)"/>
    <property type="match status" value="1"/>
</dbReference>
<dbReference type="HAMAP" id="MF_01376">
    <property type="entry name" value="PhnW_aminotrans_5"/>
    <property type="match status" value="1"/>
</dbReference>
<dbReference type="InterPro" id="IPR000192">
    <property type="entry name" value="Aminotrans_V_dom"/>
</dbReference>
<dbReference type="InterPro" id="IPR012703">
    <property type="entry name" value="NH2EtPonate_pyrv_transaminase"/>
</dbReference>
<dbReference type="InterPro" id="IPR015424">
    <property type="entry name" value="PyrdxlP-dep_Trfase"/>
</dbReference>
<dbReference type="InterPro" id="IPR015421">
    <property type="entry name" value="PyrdxlP-dep_Trfase_major"/>
</dbReference>
<dbReference type="InterPro" id="IPR015422">
    <property type="entry name" value="PyrdxlP-dep_Trfase_small"/>
</dbReference>
<dbReference type="InterPro" id="IPR024169">
    <property type="entry name" value="SP_NH2Trfase/AEP_transaminase"/>
</dbReference>
<dbReference type="NCBIfam" id="TIGR03301">
    <property type="entry name" value="PhnW-AepZ"/>
    <property type="match status" value="1"/>
</dbReference>
<dbReference type="NCBIfam" id="NF010006">
    <property type="entry name" value="PRK13479.1"/>
    <property type="match status" value="1"/>
</dbReference>
<dbReference type="NCBIfam" id="TIGR02326">
    <property type="entry name" value="transamin_PhnW"/>
    <property type="match status" value="1"/>
</dbReference>
<dbReference type="PANTHER" id="PTHR42778">
    <property type="entry name" value="2-AMINOETHYLPHOSPHONATE--PYRUVATE TRANSAMINASE"/>
    <property type="match status" value="1"/>
</dbReference>
<dbReference type="PANTHER" id="PTHR42778:SF1">
    <property type="entry name" value="2-AMINOETHYLPHOSPHONATE--PYRUVATE TRANSAMINASE"/>
    <property type="match status" value="1"/>
</dbReference>
<dbReference type="Pfam" id="PF00266">
    <property type="entry name" value="Aminotran_5"/>
    <property type="match status" value="1"/>
</dbReference>
<dbReference type="PIRSF" id="PIRSF000524">
    <property type="entry name" value="SPT"/>
    <property type="match status" value="1"/>
</dbReference>
<dbReference type="SUPFAM" id="SSF53383">
    <property type="entry name" value="PLP-dependent transferases"/>
    <property type="match status" value="1"/>
</dbReference>
<reference key="1">
    <citation type="journal article" date="2003" name="Proc. Natl. Acad. Sci. U.S.A.">
        <title>Complete genome sequence of Lactobacillus plantarum WCFS1.</title>
        <authorList>
            <person name="Kleerebezem M."/>
            <person name="Boekhorst J."/>
            <person name="van Kranenburg R."/>
            <person name="Molenaar D."/>
            <person name="Kuipers O.P."/>
            <person name="Leer R."/>
            <person name="Tarchini R."/>
            <person name="Peters S.A."/>
            <person name="Sandbrink H.M."/>
            <person name="Fiers M.W.E.J."/>
            <person name="Stiekema W."/>
            <person name="Klein Lankhorst R.M."/>
            <person name="Bron P.A."/>
            <person name="Hoffer S.M."/>
            <person name="Nierop Groot M.N."/>
            <person name="Kerkhoven R."/>
            <person name="De Vries M."/>
            <person name="Ursing B."/>
            <person name="De Vos W.M."/>
            <person name="Siezen R.J."/>
        </authorList>
    </citation>
    <scope>NUCLEOTIDE SEQUENCE [LARGE SCALE GENOMIC DNA]</scope>
    <source>
        <strain>ATCC BAA-793 / NCIMB 8826 / WCFS1</strain>
    </source>
</reference>
<reference key="2">
    <citation type="journal article" date="2012" name="J. Bacteriol.">
        <title>Complete resequencing and reannotation of the Lactobacillus plantarum WCFS1 genome.</title>
        <authorList>
            <person name="Siezen R.J."/>
            <person name="Francke C."/>
            <person name="Renckens B."/>
            <person name="Boekhorst J."/>
            <person name="Wels M."/>
            <person name="Kleerebezem M."/>
            <person name="van Hijum S.A."/>
        </authorList>
    </citation>
    <scope>NUCLEOTIDE SEQUENCE [LARGE SCALE GENOMIC DNA]</scope>
    <scope>GENOME REANNOTATION</scope>
    <source>
        <strain>ATCC BAA-793 / NCIMB 8826 / WCFS1</strain>
    </source>
</reference>
<evidence type="ECO:0000255" key="1">
    <source>
        <dbReference type="HAMAP-Rule" id="MF_01376"/>
    </source>
</evidence>
<gene>
    <name evidence="1" type="primary">phnW</name>
    <name type="ordered locus">lp_0710</name>
</gene>
<name>PHNW_LACPL</name>
<feature type="chain" id="PRO_0000286770" description="2-aminoethylphosphonate--pyruvate transaminase">
    <location>
        <begin position="1"/>
        <end position="366"/>
    </location>
</feature>
<feature type="modified residue" description="N6-(pyridoxal phosphate)lysine" evidence="1">
    <location>
        <position position="194"/>
    </location>
</feature>
<keyword id="KW-0032">Aminotransferase</keyword>
<keyword id="KW-0663">Pyridoxal phosphate</keyword>
<keyword id="KW-0670">Pyruvate</keyword>
<keyword id="KW-1185">Reference proteome</keyword>
<keyword id="KW-0808">Transferase</keyword>